<accession>Q2K9I8</accession>
<evidence type="ECO:0000255" key="1">
    <source>
        <dbReference type="HAMAP-Rule" id="MF_01206"/>
    </source>
</evidence>
<dbReference type="EC" id="1.8.5.-" evidence="1"/>
<dbReference type="EMBL" id="CP000133">
    <property type="protein sequence ID" value="ABC90498.1"/>
    <property type="molecule type" value="Genomic_DNA"/>
</dbReference>
<dbReference type="RefSeq" id="WP_011424996.1">
    <property type="nucleotide sequence ID" value="NC_007761.1"/>
</dbReference>
<dbReference type="SMR" id="Q2K9I8"/>
<dbReference type="KEGG" id="ret:RHE_CH01703"/>
<dbReference type="eggNOG" id="COG2041">
    <property type="taxonomic scope" value="Bacteria"/>
</dbReference>
<dbReference type="HOGENOM" id="CLU_045520_0_0_5"/>
<dbReference type="OrthoDB" id="9795587at2"/>
<dbReference type="Proteomes" id="UP000001936">
    <property type="component" value="Chromosome"/>
</dbReference>
<dbReference type="GO" id="GO:0042597">
    <property type="term" value="C:periplasmic space"/>
    <property type="evidence" value="ECO:0007669"/>
    <property type="project" value="UniProtKB-SubCell"/>
</dbReference>
<dbReference type="GO" id="GO:0046872">
    <property type="term" value="F:metal ion binding"/>
    <property type="evidence" value="ECO:0007669"/>
    <property type="project" value="UniProtKB-KW"/>
</dbReference>
<dbReference type="GO" id="GO:0043546">
    <property type="term" value="F:molybdopterin cofactor binding"/>
    <property type="evidence" value="ECO:0007669"/>
    <property type="project" value="UniProtKB-UniRule"/>
</dbReference>
<dbReference type="GO" id="GO:0016672">
    <property type="term" value="F:oxidoreductase activity, acting on a sulfur group of donors, quinone or similar compound as acceptor"/>
    <property type="evidence" value="ECO:0007669"/>
    <property type="project" value="UniProtKB-UniRule"/>
</dbReference>
<dbReference type="GO" id="GO:0030091">
    <property type="term" value="P:protein repair"/>
    <property type="evidence" value="ECO:0007669"/>
    <property type="project" value="UniProtKB-UniRule"/>
</dbReference>
<dbReference type="Gene3D" id="3.90.420.10">
    <property type="entry name" value="Oxidoreductase, molybdopterin-binding domain"/>
    <property type="match status" value="1"/>
</dbReference>
<dbReference type="HAMAP" id="MF_01206">
    <property type="entry name" value="MsrP"/>
    <property type="match status" value="1"/>
</dbReference>
<dbReference type="InterPro" id="IPR022867">
    <property type="entry name" value="MsrP"/>
</dbReference>
<dbReference type="InterPro" id="IPR000572">
    <property type="entry name" value="OxRdtase_Mopterin-bd_dom"/>
</dbReference>
<dbReference type="InterPro" id="IPR036374">
    <property type="entry name" value="OxRdtase_Mopterin-bd_sf"/>
</dbReference>
<dbReference type="InterPro" id="IPR006311">
    <property type="entry name" value="TAT_signal"/>
</dbReference>
<dbReference type="NCBIfam" id="NF003767">
    <property type="entry name" value="PRK05363.1"/>
    <property type="match status" value="1"/>
</dbReference>
<dbReference type="PANTHER" id="PTHR43032">
    <property type="entry name" value="PROTEIN-METHIONINE-SULFOXIDE REDUCTASE"/>
    <property type="match status" value="1"/>
</dbReference>
<dbReference type="PANTHER" id="PTHR43032:SF3">
    <property type="entry name" value="PROTEIN-METHIONINE-SULFOXIDE REDUCTASE CATALYTIC SUBUNIT MSRP"/>
    <property type="match status" value="1"/>
</dbReference>
<dbReference type="Pfam" id="PF00174">
    <property type="entry name" value="Oxidored_molyb"/>
    <property type="match status" value="1"/>
</dbReference>
<dbReference type="SUPFAM" id="SSF56524">
    <property type="entry name" value="Oxidoreductase molybdopterin-binding domain"/>
    <property type="match status" value="1"/>
</dbReference>
<dbReference type="PROSITE" id="PS51318">
    <property type="entry name" value="TAT"/>
    <property type="match status" value="1"/>
</dbReference>
<organism>
    <name type="scientific">Rhizobium etli (strain ATCC 51251 / DSM 11541 / JCM 21823 / NBRC 15573 / CFN 42)</name>
    <dbReference type="NCBI Taxonomy" id="347834"/>
    <lineage>
        <taxon>Bacteria</taxon>
        <taxon>Pseudomonadati</taxon>
        <taxon>Pseudomonadota</taxon>
        <taxon>Alphaproteobacteria</taxon>
        <taxon>Hyphomicrobiales</taxon>
        <taxon>Rhizobiaceae</taxon>
        <taxon>Rhizobium/Agrobacterium group</taxon>
        <taxon>Rhizobium</taxon>
    </lineage>
</organism>
<comment type="function">
    <text evidence="1">Part of the MsrPQ system that repairs oxidized periplasmic proteins containing methionine sulfoxide residues (Met-O), using respiratory chain electrons. Thus protects these proteins from oxidative-stress damage caused by reactive species of oxygen and chlorine generated by the host defense mechanisms. MsrPQ is essential for the maintenance of envelope integrity under bleach stress, rescuing a wide series of structurally unrelated periplasmic proteins from methionine oxidation. The catalytic subunit MsrP is non-stereospecific, being able to reduce both (R-) and (S-) diastereoisomers of methionine sulfoxide.</text>
</comment>
<comment type="catalytic activity">
    <reaction evidence="1">
        <text>L-methionyl-[protein] + a quinone + H2O = L-methionyl-(S)-S-oxide-[protein] + a quinol</text>
        <dbReference type="Rhea" id="RHEA:51292"/>
        <dbReference type="Rhea" id="RHEA-COMP:12313"/>
        <dbReference type="Rhea" id="RHEA-COMP:12315"/>
        <dbReference type="ChEBI" id="CHEBI:15377"/>
        <dbReference type="ChEBI" id="CHEBI:16044"/>
        <dbReference type="ChEBI" id="CHEBI:24646"/>
        <dbReference type="ChEBI" id="CHEBI:44120"/>
        <dbReference type="ChEBI" id="CHEBI:132124"/>
    </reaction>
</comment>
<comment type="catalytic activity">
    <reaction evidence="1">
        <text>L-methionyl-[protein] + a quinone + H2O = L-methionyl-(R)-S-oxide-[protein] + a quinol</text>
        <dbReference type="Rhea" id="RHEA:51296"/>
        <dbReference type="Rhea" id="RHEA-COMP:12313"/>
        <dbReference type="Rhea" id="RHEA-COMP:12314"/>
        <dbReference type="ChEBI" id="CHEBI:15377"/>
        <dbReference type="ChEBI" id="CHEBI:16044"/>
        <dbReference type="ChEBI" id="CHEBI:24646"/>
        <dbReference type="ChEBI" id="CHEBI:45764"/>
        <dbReference type="ChEBI" id="CHEBI:132124"/>
    </reaction>
</comment>
<comment type="cofactor">
    <cofactor evidence="1">
        <name>Mo-molybdopterin</name>
        <dbReference type="ChEBI" id="CHEBI:71302"/>
    </cofactor>
    <text evidence="1">Binds 1 Mo-molybdopterin (Mo-MPT) cofactor per subunit.</text>
</comment>
<comment type="subunit">
    <text evidence="1">Heterodimer of a catalytic subunit (MsrP) and a heme-binding subunit (MsrQ).</text>
</comment>
<comment type="subcellular location">
    <subcellularLocation>
        <location evidence="1">Periplasm</location>
    </subcellularLocation>
    <text evidence="1">Is attached to the inner membrane when interacting with the MsrQ subunit.</text>
</comment>
<comment type="PTM">
    <text evidence="1">Predicted to be exported by the Tat system. The position of the signal peptide cleavage has not been experimentally proven.</text>
</comment>
<comment type="similarity">
    <text evidence="1">Belongs to the MsrP family.</text>
</comment>
<sequence>MPSYRPPKIASSEITPRQVYLRRREFLGAATLGAMALYGAGKASAAAFSAVESKYKVDEKTTPIKDVTTYNNFYEFGLDKGDPAALSGEFKPLPWAVKVDGMVNKPGTFDVEALIKEFPIEERTYRMRCVEAWSMVIPWNGFPLAALLNKVEPLGSAKYVAFETVVRPEEMPGQKGFFQSLDWPYVEGLRLDEARHPLTLLAVGLYGETLPNQNGAPIRLVVPWKYGFKGIKSIVRITLTDQQPKNTWQVTNPQEYGFYANVNPAVDHPRWSQASERRIGGSGFFGASRRPTLPFNGYADEVASLYAGMDLKANF</sequence>
<reference key="1">
    <citation type="journal article" date="2006" name="Proc. Natl. Acad. Sci. U.S.A.">
        <title>The partitioned Rhizobium etli genome: genetic and metabolic redundancy in seven interacting replicons.</title>
        <authorList>
            <person name="Gonzalez V."/>
            <person name="Santamaria R.I."/>
            <person name="Bustos P."/>
            <person name="Hernandez-Gonzalez I."/>
            <person name="Medrano-Soto A."/>
            <person name="Moreno-Hagelsieb G."/>
            <person name="Janga S.C."/>
            <person name="Ramirez M.A."/>
            <person name="Jimenez-Jacinto V."/>
            <person name="Collado-Vides J."/>
            <person name="Davila G."/>
        </authorList>
    </citation>
    <scope>NUCLEOTIDE SEQUENCE [LARGE SCALE GENOMIC DNA]</scope>
    <source>
        <strain>ATCC 51251 / DSM 11541 / JCM 21823 / NBRC 15573 / CFN 42</strain>
    </source>
</reference>
<protein>
    <recommendedName>
        <fullName evidence="1">Protein-methionine-sulfoxide reductase catalytic subunit MsrP</fullName>
        <ecNumber evidence="1">1.8.5.-</ecNumber>
    </recommendedName>
</protein>
<keyword id="KW-0479">Metal-binding</keyword>
<keyword id="KW-0500">Molybdenum</keyword>
<keyword id="KW-0560">Oxidoreductase</keyword>
<keyword id="KW-0574">Periplasm</keyword>
<keyword id="KW-1185">Reference proteome</keyword>
<keyword id="KW-0732">Signal</keyword>
<gene>
    <name evidence="1" type="primary">msrP</name>
    <name type="ordered locus">RHE_CH01703</name>
</gene>
<feature type="signal peptide" description="Tat-type signal" evidence="1">
    <location>
        <begin position="1"/>
        <end position="45"/>
    </location>
</feature>
<feature type="chain" id="PRO_1000066162" description="Protein-methionine-sulfoxide reductase catalytic subunit MsrP" evidence="1">
    <location>
        <begin position="46"/>
        <end position="315"/>
    </location>
</feature>
<feature type="binding site" evidence="1">
    <location>
        <position position="71"/>
    </location>
    <ligand>
        <name>Mo-molybdopterin</name>
        <dbReference type="ChEBI" id="CHEBI:71302"/>
    </ligand>
</feature>
<feature type="binding site" evidence="1">
    <location>
        <begin position="74"/>
        <end position="75"/>
    </location>
    <ligand>
        <name>Mo-molybdopterin</name>
        <dbReference type="ChEBI" id="CHEBI:71302"/>
    </ligand>
</feature>
<feature type="binding site" evidence="1">
    <location>
        <position position="129"/>
    </location>
    <ligand>
        <name>Mo-molybdopterin</name>
        <dbReference type="ChEBI" id="CHEBI:71302"/>
    </ligand>
    <ligandPart>
        <name>Mo</name>
        <dbReference type="ChEBI" id="CHEBI:28685"/>
    </ligandPart>
</feature>
<feature type="binding site" evidence="1">
    <location>
        <position position="164"/>
    </location>
    <ligand>
        <name>Mo-molybdopterin</name>
        <dbReference type="ChEBI" id="CHEBI:71302"/>
    </ligand>
</feature>
<feature type="binding site" evidence="1">
    <location>
        <position position="214"/>
    </location>
    <ligand>
        <name>Mo-molybdopterin</name>
        <dbReference type="ChEBI" id="CHEBI:71302"/>
    </ligand>
</feature>
<feature type="binding site" evidence="1">
    <location>
        <position position="219"/>
    </location>
    <ligand>
        <name>Mo-molybdopterin</name>
        <dbReference type="ChEBI" id="CHEBI:71302"/>
    </ligand>
</feature>
<feature type="binding site" evidence="1">
    <location>
        <begin position="230"/>
        <end position="232"/>
    </location>
    <ligand>
        <name>Mo-molybdopterin</name>
        <dbReference type="ChEBI" id="CHEBI:71302"/>
    </ligand>
</feature>
<name>MSRP_RHIEC</name>
<proteinExistence type="inferred from homology"/>